<reference key="1">
    <citation type="journal article" date="2002" name="Yeast">
        <title>Genomic differences between Candida glabrata and Saccharomyces cerevisiae around the MRPL28 and GCN3 loci.</title>
        <authorList>
            <person name="Walsh D.W."/>
            <person name="Wolfe K.H."/>
            <person name="Butler G."/>
        </authorList>
    </citation>
    <scope>NUCLEOTIDE SEQUENCE [GENOMIC DNA]</scope>
    <source>
        <strain>ATCC 2001 / BCRC 20586 / JCM 3761 / NBRC 0622 / NRRL Y-65 / CBS 138</strain>
    </source>
</reference>
<reference key="2">
    <citation type="journal article" date="2004" name="Nature">
        <title>Genome evolution in yeasts.</title>
        <authorList>
            <person name="Dujon B."/>
            <person name="Sherman D."/>
            <person name="Fischer G."/>
            <person name="Durrens P."/>
            <person name="Casaregola S."/>
            <person name="Lafontaine I."/>
            <person name="de Montigny J."/>
            <person name="Marck C."/>
            <person name="Neuveglise C."/>
            <person name="Talla E."/>
            <person name="Goffard N."/>
            <person name="Frangeul L."/>
            <person name="Aigle M."/>
            <person name="Anthouard V."/>
            <person name="Babour A."/>
            <person name="Barbe V."/>
            <person name="Barnay S."/>
            <person name="Blanchin S."/>
            <person name="Beckerich J.-M."/>
            <person name="Beyne E."/>
            <person name="Bleykasten C."/>
            <person name="Boisrame A."/>
            <person name="Boyer J."/>
            <person name="Cattolico L."/>
            <person name="Confanioleri F."/>
            <person name="de Daruvar A."/>
            <person name="Despons L."/>
            <person name="Fabre E."/>
            <person name="Fairhead C."/>
            <person name="Ferry-Dumazet H."/>
            <person name="Groppi A."/>
            <person name="Hantraye F."/>
            <person name="Hennequin C."/>
            <person name="Jauniaux N."/>
            <person name="Joyet P."/>
            <person name="Kachouri R."/>
            <person name="Kerrest A."/>
            <person name="Koszul R."/>
            <person name="Lemaire M."/>
            <person name="Lesur I."/>
            <person name="Ma L."/>
            <person name="Muller H."/>
            <person name="Nicaud J.-M."/>
            <person name="Nikolski M."/>
            <person name="Oztas S."/>
            <person name="Ozier-Kalogeropoulos O."/>
            <person name="Pellenz S."/>
            <person name="Potier S."/>
            <person name="Richard G.-F."/>
            <person name="Straub M.-L."/>
            <person name="Suleau A."/>
            <person name="Swennen D."/>
            <person name="Tekaia F."/>
            <person name="Wesolowski-Louvel M."/>
            <person name="Westhof E."/>
            <person name="Wirth B."/>
            <person name="Zeniou-Meyer M."/>
            <person name="Zivanovic Y."/>
            <person name="Bolotin-Fukuhara M."/>
            <person name="Thierry A."/>
            <person name="Bouchier C."/>
            <person name="Caudron B."/>
            <person name="Scarpelli C."/>
            <person name="Gaillardin C."/>
            <person name="Weissenbach J."/>
            <person name="Wincker P."/>
            <person name="Souciet J.-L."/>
        </authorList>
    </citation>
    <scope>NUCLEOTIDE SEQUENCE [LARGE SCALE GENOMIC DNA]</scope>
    <source>
        <strain>ATCC 2001 / BCRC 20586 / JCM 3761 / NBRC 0622 / NRRL Y-65 / CBS 138</strain>
    </source>
</reference>
<comment type="function">
    <text evidence="1">May be involved in the mitochondrial lipid metabolism.</text>
</comment>
<comment type="subcellular location">
    <subcellularLocation>
        <location evidence="1">Mitochondrion</location>
    </subcellularLocation>
</comment>
<comment type="similarity">
    <text evidence="3">Belongs to the TRAFAC class YlqF/YawG GTPase family. GEP3 subfamily.</text>
</comment>
<evidence type="ECO:0000250" key="1"/>
<evidence type="ECO:0000255" key="2"/>
<evidence type="ECO:0000255" key="3">
    <source>
        <dbReference type="PROSITE-ProRule" id="PRU01058"/>
    </source>
</evidence>
<protein>
    <recommendedName>
        <fullName>Genetic interactor of prohibitins 3, mitochondrial</fullName>
    </recommendedName>
    <alternativeName>
        <fullName>Found in mitochondrial proteome protein 38</fullName>
    </alternativeName>
</protein>
<proteinExistence type="inferred from homology"/>
<dbReference type="EMBL" id="AY083607">
    <property type="protein sequence ID" value="AAM08103.1"/>
    <property type="molecule type" value="Genomic_DNA"/>
</dbReference>
<dbReference type="EMBL" id="CR380958">
    <property type="protein sequence ID" value="CAG61867.1"/>
    <property type="molecule type" value="Genomic_DNA"/>
</dbReference>
<dbReference type="RefSeq" id="XP_448897.1">
    <property type="nucleotide sequence ID" value="XM_448897.1"/>
</dbReference>
<dbReference type="SMR" id="Q8TFK7"/>
<dbReference type="FunCoup" id="Q8TFK7">
    <property type="interactions" value="109"/>
</dbReference>
<dbReference type="STRING" id="284593.Q8TFK7"/>
<dbReference type="EnsemblFungi" id="CAGL0L02893g-T">
    <property type="protein sequence ID" value="CAGL0L02893g-T-p1"/>
    <property type="gene ID" value="CAGL0L02893g"/>
</dbReference>
<dbReference type="KEGG" id="cgr:2890836"/>
<dbReference type="CGD" id="CAL0135692">
    <property type="gene designation" value="CAGL0L02893g"/>
</dbReference>
<dbReference type="VEuPathDB" id="FungiDB:CAGL0L02893g"/>
<dbReference type="eggNOG" id="ENOG502S0UP">
    <property type="taxonomic scope" value="Eukaryota"/>
</dbReference>
<dbReference type="HOGENOM" id="CLU_025792_1_0_1"/>
<dbReference type="InParanoid" id="Q8TFK7"/>
<dbReference type="OMA" id="IIPPFYG"/>
<dbReference type="Proteomes" id="UP000002428">
    <property type="component" value="Chromosome L"/>
</dbReference>
<dbReference type="GO" id="GO:0005743">
    <property type="term" value="C:mitochondrial inner membrane"/>
    <property type="evidence" value="ECO:0007669"/>
    <property type="project" value="EnsemblFungi"/>
</dbReference>
<dbReference type="GO" id="GO:0005525">
    <property type="term" value="F:GTP binding"/>
    <property type="evidence" value="ECO:0007669"/>
    <property type="project" value="InterPro"/>
</dbReference>
<dbReference type="GO" id="GO:0030490">
    <property type="term" value="P:maturation of SSU-rRNA"/>
    <property type="evidence" value="ECO:0007669"/>
    <property type="project" value="EnsemblFungi"/>
</dbReference>
<dbReference type="CDD" id="cd01855">
    <property type="entry name" value="YqeH"/>
    <property type="match status" value="1"/>
</dbReference>
<dbReference type="Gene3D" id="3.40.50.300">
    <property type="entry name" value="P-loop containing nucleotide triphosphate hydrolases"/>
    <property type="match status" value="1"/>
</dbReference>
<dbReference type="InterPro" id="IPR030378">
    <property type="entry name" value="G_CP_dom"/>
</dbReference>
<dbReference type="InterPro" id="IPR006073">
    <property type="entry name" value="GTP-bd"/>
</dbReference>
<dbReference type="InterPro" id="IPR050896">
    <property type="entry name" value="Mito_lipid_metab_GTPase"/>
</dbReference>
<dbReference type="InterPro" id="IPR027417">
    <property type="entry name" value="P-loop_NTPase"/>
</dbReference>
<dbReference type="PANTHER" id="PTHR46434">
    <property type="entry name" value="GENETIC INTERACTOR OF PROHIBITINS 3, MITOCHONDRIAL"/>
    <property type="match status" value="1"/>
</dbReference>
<dbReference type="PANTHER" id="PTHR46434:SF1">
    <property type="entry name" value="GENETIC INTERACTOR OF PROHIBITINS 3, MITOCHONDRIAL"/>
    <property type="match status" value="1"/>
</dbReference>
<dbReference type="Pfam" id="PF01926">
    <property type="entry name" value="MMR_HSR1"/>
    <property type="match status" value="1"/>
</dbReference>
<dbReference type="SUPFAM" id="SSF52540">
    <property type="entry name" value="P-loop containing nucleoside triphosphate hydrolases"/>
    <property type="match status" value="1"/>
</dbReference>
<dbReference type="PROSITE" id="PS51721">
    <property type="entry name" value="G_CP"/>
    <property type="match status" value="1"/>
</dbReference>
<sequence length="526" mass="61413">MRFRRYFSSTFKRLIDCNSCGVKLQNKQPGALGYYTKKDDNLVKKITLEDVKYLIFGQDIQRIKEMTVDTENYDIKLEKPLICKRCSEALHNNKYNATEFKDIPFEEVEKQIPLHSNVVHTAPILEFPFHINSQLLKNRTFNTTMVFTKADRVFKNKKQVQKQIPIFLDAFFETYLNSKATRNIVTSTLNRWNLDTLFSFLHGTNYFVGEPNSGKSTLINALLRRLFGVKIRGNDVKNFELDKQAEEELAVSKKFFLEKQLAGVSHIPNLTRTLQAYKIKQKIIYDLPGYSNYNSYRIDEFIDPKWLQRFRKTSIFSEKRVKKKRYDSIVGNENGKCLTLGGIFYLVPPPTTINQIVCYIPGELRQFHNTDRGIEVLGKSGSKEHPLNKYCGIKPGIGKEKYIRHIIPPFQGPIEVVLKDIGYFSLTPTGKYEYKGLYELWVLDGIDVCIRKPLERVAEDSYDKSQEGKYYIKEPVVSHTYVVAHNDPNPLQTVKESYEKVKERTDEILNKYNLEKFGNNMWHFKW</sequence>
<name>GEP3_CANGA</name>
<organism>
    <name type="scientific">Candida glabrata (strain ATCC 2001 / BCRC 20586 / JCM 3761 / NBRC 0622 / NRRL Y-65 / CBS 138)</name>
    <name type="common">Yeast</name>
    <name type="synonym">Nakaseomyces glabratus</name>
    <dbReference type="NCBI Taxonomy" id="284593"/>
    <lineage>
        <taxon>Eukaryota</taxon>
        <taxon>Fungi</taxon>
        <taxon>Dikarya</taxon>
        <taxon>Ascomycota</taxon>
        <taxon>Saccharomycotina</taxon>
        <taxon>Saccharomycetes</taxon>
        <taxon>Saccharomycetales</taxon>
        <taxon>Saccharomycetaceae</taxon>
        <taxon>Nakaseomyces</taxon>
    </lineage>
</organism>
<feature type="transit peptide" description="Mitochondrion" evidence="2">
    <location>
        <begin position="1"/>
        <end position="14"/>
    </location>
</feature>
<feature type="chain" id="PRO_0000409631" description="Genetic interactor of prohibitins 3, mitochondrial">
    <location>
        <begin position="15"/>
        <end position="526"/>
    </location>
</feature>
<feature type="domain" description="CP-type G" evidence="3">
    <location>
        <begin position="105"/>
        <end position="293"/>
    </location>
</feature>
<keyword id="KW-0496">Mitochondrion</keyword>
<keyword id="KW-1185">Reference proteome</keyword>
<keyword id="KW-0809">Transit peptide</keyword>
<accession>Q8TFK7</accession>
<accession>F2Z674</accession>
<accession>Q6FLJ7</accession>
<gene>
    <name type="primary">GEP3</name>
    <name type="synonym">FMP48</name>
    <name type="ordered locus">CAGL0L02893g</name>
</gene>